<organism>
    <name type="scientific">Influenza A virus (strain A/Port Chalmers/1/1973 H3N2)</name>
    <dbReference type="NCBI Taxonomy" id="385624"/>
    <lineage>
        <taxon>Viruses</taxon>
        <taxon>Riboviria</taxon>
        <taxon>Orthornavirae</taxon>
        <taxon>Negarnaviricota</taxon>
        <taxon>Polyploviricotina</taxon>
        <taxon>Insthoviricetes</taxon>
        <taxon>Articulavirales</taxon>
        <taxon>Orthomyxoviridae</taxon>
        <taxon>Alphainfluenzavirus</taxon>
        <taxon>Alphainfluenzavirus influenzae</taxon>
        <taxon>Influenza A virus</taxon>
    </lineage>
</organism>
<organismHost>
    <name type="scientific">Aves</name>
    <dbReference type="NCBI Taxonomy" id="8782"/>
</organismHost>
<organismHost>
    <name type="scientific">Cetacea</name>
    <name type="common">whales</name>
    <dbReference type="NCBI Taxonomy" id="9721"/>
</organismHost>
<organismHost>
    <name type="scientific">Homo sapiens</name>
    <name type="common">Human</name>
    <dbReference type="NCBI Taxonomy" id="9606"/>
</organismHost>
<organismHost>
    <name type="scientific">Phocidae</name>
    <name type="common">true seals</name>
    <dbReference type="NCBI Taxonomy" id="9709"/>
</organismHost>
<organismHost>
    <name type="scientific">Sus scrofa</name>
    <name type="common">Pig</name>
    <dbReference type="NCBI Taxonomy" id="9823"/>
</organismHost>
<evidence type="ECO:0000255" key="1">
    <source>
        <dbReference type="HAMAP-Rule" id="MF_04070"/>
    </source>
</evidence>
<evidence type="ECO:0000256" key="2">
    <source>
        <dbReference type="SAM" id="MobiDB-lite"/>
    </source>
</evidence>
<keyword id="KW-0167">Capsid protein</keyword>
<keyword id="KW-1139">Helical capsid protein</keyword>
<keyword id="KW-1048">Host nucleus</keyword>
<keyword id="KW-0945">Host-virus interaction</keyword>
<keyword id="KW-0687">Ribonucleoprotein</keyword>
<keyword id="KW-0694">RNA-binding</keyword>
<keyword id="KW-0543">Viral nucleoprotein</keyword>
<keyword id="KW-1163">Viral penetration into host nucleus</keyword>
<keyword id="KW-0946">Virion</keyword>
<keyword id="KW-1160">Virus entry into host cell</keyword>
<gene>
    <name evidence="1" type="primary">NP</name>
</gene>
<protein>
    <recommendedName>
        <fullName evidence="1">Nucleoprotein</fullName>
    </recommendedName>
    <alternativeName>
        <fullName evidence="1">Nucleocapsid protein</fullName>
        <shortName evidence="1">Protein N</shortName>
    </alternativeName>
</protein>
<accession>Q1PUD5</accession>
<comment type="function">
    <text evidence="1">Encapsidates the negative strand viral RNA, protecting it from nucleases. The encapsidated genomic RNA is termed the ribonucleoprotein (RNP) and serves as template for transcription and replication. The RNP needs to be localized in the host nucleus to start an infectious cycle, but is too large to diffuse through the nuclear pore complex. NP comprises at least 2 nuclear localization signals that are responsible for the active RNP import into the nucleus through cellular importin alpha/beta pathway. Later in the infection, nclear export of RNPs are mediated through viral proteins NEP interacting with M1 which binds nucleoproteins. It is possible that nucleoprotein binds directly host exportin-1/XPO1 and plays an active role in RNPs nuclear export. M1 interaction with RNP seems to hide nucleoprotein's nuclear localization signals. Soon after a virion infects a new cell, M1 dissociates from the RNP under acidification of the virion driven by M2 protein. Dissociation of M1 from RNP unmasks nucleoprotein's nuclear localization signals, targeting the RNP to the nucleus.</text>
</comment>
<comment type="subunit">
    <text evidence="1">Homomultimerizes to form the nucleocapsid. May bind host exportin-1/XPO1. Binds to viral genomic RNA. Protein-RNA contacts are mediated by a combination of electrostatic interactions between positively charged residues and the phosphate backbone and planar interactions between aromatic side chains and bases.</text>
</comment>
<comment type="subcellular location">
    <subcellularLocation>
        <location evidence="1">Virion</location>
    </subcellularLocation>
    <subcellularLocation>
        <location evidence="1">Host nucleus</location>
    </subcellularLocation>
</comment>
<comment type="PTM">
    <text evidence="1">Late in virus-infected cells, may be cleaved from a 56-kDa protein to a 53-kDa protein by a cellular caspase. This cleavage might be a marker for the onset of apoptosis in infected cells or have a specific function in virus host interaction.</text>
</comment>
<comment type="similarity">
    <text evidence="1">Belongs to the influenza viruses nucleoprotein family.</text>
</comment>
<dbReference type="EMBL" id="CY009351">
    <property type="protein sequence ID" value="ABE12555.1"/>
    <property type="molecule type" value="Genomic_RNA"/>
</dbReference>
<dbReference type="SMR" id="Q1PUD5"/>
<dbReference type="PRO" id="PR:Q1PUD5"/>
<dbReference type="Proteomes" id="UP000133870">
    <property type="component" value="Genome"/>
</dbReference>
<dbReference type="GO" id="GO:0019029">
    <property type="term" value="C:helical viral capsid"/>
    <property type="evidence" value="ECO:0007669"/>
    <property type="project" value="UniProtKB-UniRule"/>
</dbReference>
<dbReference type="GO" id="GO:0043657">
    <property type="term" value="C:host cell"/>
    <property type="evidence" value="ECO:0007669"/>
    <property type="project" value="GOC"/>
</dbReference>
<dbReference type="GO" id="GO:0042025">
    <property type="term" value="C:host cell nucleus"/>
    <property type="evidence" value="ECO:0007669"/>
    <property type="project" value="UniProtKB-SubCell"/>
</dbReference>
<dbReference type="GO" id="GO:1990904">
    <property type="term" value="C:ribonucleoprotein complex"/>
    <property type="evidence" value="ECO:0007669"/>
    <property type="project" value="UniProtKB-KW"/>
</dbReference>
<dbReference type="GO" id="GO:0019013">
    <property type="term" value="C:viral nucleocapsid"/>
    <property type="evidence" value="ECO:0007669"/>
    <property type="project" value="UniProtKB-UniRule"/>
</dbReference>
<dbReference type="GO" id="GO:0003723">
    <property type="term" value="F:RNA binding"/>
    <property type="evidence" value="ECO:0007669"/>
    <property type="project" value="UniProtKB-UniRule"/>
</dbReference>
<dbReference type="GO" id="GO:0005198">
    <property type="term" value="F:structural molecule activity"/>
    <property type="evidence" value="ECO:0007669"/>
    <property type="project" value="UniProtKB-UniRule"/>
</dbReference>
<dbReference type="GO" id="GO:0046718">
    <property type="term" value="P:symbiont entry into host cell"/>
    <property type="evidence" value="ECO:0007669"/>
    <property type="project" value="UniProtKB-KW"/>
</dbReference>
<dbReference type="GO" id="GO:0075732">
    <property type="term" value="P:viral penetration into host nucleus"/>
    <property type="evidence" value="ECO:0007669"/>
    <property type="project" value="UniProtKB-UniRule"/>
</dbReference>
<dbReference type="HAMAP" id="MF_04070">
    <property type="entry name" value="INFV_NCAP"/>
    <property type="match status" value="1"/>
</dbReference>
<dbReference type="InterPro" id="IPR002141">
    <property type="entry name" value="Flu_NP"/>
</dbReference>
<dbReference type="Pfam" id="PF00506">
    <property type="entry name" value="Flu_NP"/>
    <property type="match status" value="1"/>
</dbReference>
<dbReference type="SUPFAM" id="SSF161003">
    <property type="entry name" value="flu NP-like"/>
    <property type="match status" value="1"/>
</dbReference>
<reference key="1">
    <citation type="submission" date="2006-04" db="EMBL/GenBank/DDBJ databases">
        <title>The NIAID influenza genome sequencing project.</title>
        <authorList>
            <person name="Spiro D."/>
            <person name="Ghedin E."/>
            <person name="Sengamalay N."/>
            <person name="Halpin R."/>
            <person name="Boyne A."/>
            <person name="Zaborsky J."/>
            <person name="Feldblyum T."/>
            <person name="Subbu V."/>
            <person name="Sparenborg J."/>
            <person name="Shumway M."/>
            <person name="Sitz J."/>
            <person name="Katzel D."/>
            <person name="Koo H."/>
            <person name="Salzberg S.L."/>
            <person name="Griesemer S."/>
            <person name="St George K."/>
            <person name="Bennett R."/>
            <person name="Taylor J."/>
            <person name="Bennink J.R."/>
            <person name="Yewdell J.W."/>
            <person name="Bao Y."/>
            <person name="Bolotov P."/>
            <person name="Dernovoy D."/>
            <person name="Kiryutin B."/>
            <person name="Lipman D.J."/>
            <person name="Tatusova T."/>
        </authorList>
    </citation>
    <scope>NUCLEOTIDE SEQUENCE [GENOMIC RNA]</scope>
</reference>
<feature type="chain" id="PRO_0000402427" description="Nucleoprotein">
    <location>
        <begin position="1"/>
        <end position="498"/>
    </location>
</feature>
<feature type="region of interest" description="Disordered" evidence="2">
    <location>
        <begin position="1"/>
        <end position="21"/>
    </location>
</feature>
<feature type="short sequence motif" description="Unconventional nuclear localization signal" evidence="1">
    <location>
        <begin position="1"/>
        <end position="18"/>
    </location>
</feature>
<feature type="short sequence motif" description="Bipartite nuclear localization signal" evidence="1">
    <location>
        <begin position="198"/>
        <end position="216"/>
    </location>
</feature>
<feature type="compositionally biased region" description="Basic and acidic residues" evidence="2">
    <location>
        <begin position="8"/>
        <end position="21"/>
    </location>
</feature>
<proteinExistence type="inferred from homology"/>
<sequence length="498" mass="56083">MASQGTKRSYEQMETDGERQNATEIRASVGKMIDGIGRFYIQMCTELKLSDYEGRLIQNSLTIERMVLSAFDERRNRYLEEHPSAGKDPKKTGGPIYKRVDGKWMRELVLYDKEEIRRIWRQANNGDDATAGLTHMMIWHSNLNDTTYQRTRALVRTGMDPRMCSLMQGSTLPRRSGAAGAAVKGVGTMVMELIRMIKRGINDRNFWRGENGRKTRGAYERMCNILKGKFQTAAQRAMMDQVRESRNPGNAEIEDLIFLARSALILRGSVAHKSCLPACVYGPAVASGYNFEKEGYSLVGIDPFKLLQNSQVYSLIRPNENPAHKSQLVWMACNSAAFEDLRLLSFIRGTKVSPRGKLSTRGVQIASNENMDTMESSTLELRSRYWAIRTRSGGNTNQQRASAGQISVQPAFSVQRNLPFDKSTIMAAFTGNTEGRTSDMRAEIIRMMEGAKPEEVSFRGRGVFELSDEKATNPIVPSFDMSNEGSYFFGDNAEEYDN</sequence>
<name>NCAP_I73A5</name>